<dbReference type="EC" id="6.2.1.5" evidence="1"/>
<dbReference type="EMBL" id="AM167904">
    <property type="protein sequence ID" value="CAJ49914.1"/>
    <property type="molecule type" value="Genomic_DNA"/>
</dbReference>
<dbReference type="RefSeq" id="WP_012417965.1">
    <property type="nucleotide sequence ID" value="NC_010645.1"/>
</dbReference>
<dbReference type="SMR" id="Q2KYF7"/>
<dbReference type="STRING" id="360910.BAV2304"/>
<dbReference type="GeneID" id="92934581"/>
<dbReference type="KEGG" id="bav:BAV2304"/>
<dbReference type="eggNOG" id="COG0045">
    <property type="taxonomic scope" value="Bacteria"/>
</dbReference>
<dbReference type="HOGENOM" id="CLU_037430_0_2_4"/>
<dbReference type="OrthoDB" id="9802602at2"/>
<dbReference type="UniPathway" id="UPA00223">
    <property type="reaction ID" value="UER00999"/>
</dbReference>
<dbReference type="Proteomes" id="UP000001977">
    <property type="component" value="Chromosome"/>
</dbReference>
<dbReference type="GO" id="GO:0005829">
    <property type="term" value="C:cytosol"/>
    <property type="evidence" value="ECO:0007669"/>
    <property type="project" value="TreeGrafter"/>
</dbReference>
<dbReference type="GO" id="GO:0042709">
    <property type="term" value="C:succinate-CoA ligase complex"/>
    <property type="evidence" value="ECO:0007669"/>
    <property type="project" value="TreeGrafter"/>
</dbReference>
<dbReference type="GO" id="GO:0005524">
    <property type="term" value="F:ATP binding"/>
    <property type="evidence" value="ECO:0007669"/>
    <property type="project" value="UniProtKB-UniRule"/>
</dbReference>
<dbReference type="GO" id="GO:0000287">
    <property type="term" value="F:magnesium ion binding"/>
    <property type="evidence" value="ECO:0007669"/>
    <property type="project" value="UniProtKB-UniRule"/>
</dbReference>
<dbReference type="GO" id="GO:0004775">
    <property type="term" value="F:succinate-CoA ligase (ADP-forming) activity"/>
    <property type="evidence" value="ECO:0007669"/>
    <property type="project" value="UniProtKB-UniRule"/>
</dbReference>
<dbReference type="GO" id="GO:0004776">
    <property type="term" value="F:succinate-CoA ligase (GDP-forming) activity"/>
    <property type="evidence" value="ECO:0007669"/>
    <property type="project" value="RHEA"/>
</dbReference>
<dbReference type="GO" id="GO:0006104">
    <property type="term" value="P:succinyl-CoA metabolic process"/>
    <property type="evidence" value="ECO:0007669"/>
    <property type="project" value="TreeGrafter"/>
</dbReference>
<dbReference type="GO" id="GO:0006099">
    <property type="term" value="P:tricarboxylic acid cycle"/>
    <property type="evidence" value="ECO:0007669"/>
    <property type="project" value="UniProtKB-UniRule"/>
</dbReference>
<dbReference type="FunFam" id="3.30.1490.20:FF:000002">
    <property type="entry name" value="Succinate--CoA ligase [ADP-forming] subunit beta"/>
    <property type="match status" value="1"/>
</dbReference>
<dbReference type="FunFam" id="3.30.470.20:FF:000002">
    <property type="entry name" value="Succinate--CoA ligase [ADP-forming] subunit beta"/>
    <property type="match status" value="1"/>
</dbReference>
<dbReference type="FunFam" id="3.40.50.261:FF:000001">
    <property type="entry name" value="Succinate--CoA ligase [ADP-forming] subunit beta"/>
    <property type="match status" value="1"/>
</dbReference>
<dbReference type="Gene3D" id="3.30.1490.20">
    <property type="entry name" value="ATP-grasp fold, A domain"/>
    <property type="match status" value="1"/>
</dbReference>
<dbReference type="Gene3D" id="3.30.470.20">
    <property type="entry name" value="ATP-grasp fold, B domain"/>
    <property type="match status" value="1"/>
</dbReference>
<dbReference type="Gene3D" id="3.40.50.261">
    <property type="entry name" value="Succinyl-CoA synthetase domains"/>
    <property type="match status" value="1"/>
</dbReference>
<dbReference type="HAMAP" id="MF_00558">
    <property type="entry name" value="Succ_CoA_beta"/>
    <property type="match status" value="1"/>
</dbReference>
<dbReference type="InterPro" id="IPR011761">
    <property type="entry name" value="ATP-grasp"/>
</dbReference>
<dbReference type="InterPro" id="IPR013650">
    <property type="entry name" value="ATP-grasp_succ-CoA_synth-type"/>
</dbReference>
<dbReference type="InterPro" id="IPR013815">
    <property type="entry name" value="ATP_grasp_subdomain_1"/>
</dbReference>
<dbReference type="InterPro" id="IPR017866">
    <property type="entry name" value="Succ-CoA_synthase_bsu_CS"/>
</dbReference>
<dbReference type="InterPro" id="IPR005811">
    <property type="entry name" value="SUCC_ACL_C"/>
</dbReference>
<dbReference type="InterPro" id="IPR005809">
    <property type="entry name" value="Succ_CoA_ligase-like_bsu"/>
</dbReference>
<dbReference type="InterPro" id="IPR016102">
    <property type="entry name" value="Succinyl-CoA_synth-like"/>
</dbReference>
<dbReference type="NCBIfam" id="NF001913">
    <property type="entry name" value="PRK00696.1"/>
    <property type="match status" value="1"/>
</dbReference>
<dbReference type="NCBIfam" id="TIGR01016">
    <property type="entry name" value="sucCoAbeta"/>
    <property type="match status" value="1"/>
</dbReference>
<dbReference type="PANTHER" id="PTHR11815:SF10">
    <property type="entry name" value="SUCCINATE--COA LIGASE [GDP-FORMING] SUBUNIT BETA, MITOCHONDRIAL"/>
    <property type="match status" value="1"/>
</dbReference>
<dbReference type="PANTHER" id="PTHR11815">
    <property type="entry name" value="SUCCINYL-COA SYNTHETASE BETA CHAIN"/>
    <property type="match status" value="1"/>
</dbReference>
<dbReference type="Pfam" id="PF08442">
    <property type="entry name" value="ATP-grasp_2"/>
    <property type="match status" value="1"/>
</dbReference>
<dbReference type="Pfam" id="PF00549">
    <property type="entry name" value="Ligase_CoA"/>
    <property type="match status" value="1"/>
</dbReference>
<dbReference type="PIRSF" id="PIRSF001554">
    <property type="entry name" value="SucCS_beta"/>
    <property type="match status" value="1"/>
</dbReference>
<dbReference type="SUPFAM" id="SSF56059">
    <property type="entry name" value="Glutathione synthetase ATP-binding domain-like"/>
    <property type="match status" value="1"/>
</dbReference>
<dbReference type="SUPFAM" id="SSF52210">
    <property type="entry name" value="Succinyl-CoA synthetase domains"/>
    <property type="match status" value="1"/>
</dbReference>
<dbReference type="PROSITE" id="PS50975">
    <property type="entry name" value="ATP_GRASP"/>
    <property type="match status" value="1"/>
</dbReference>
<dbReference type="PROSITE" id="PS01217">
    <property type="entry name" value="SUCCINYL_COA_LIG_3"/>
    <property type="match status" value="1"/>
</dbReference>
<sequence>MKIHEYQGKELLKQFGVPVPRGIPAFSVEEAVAAAEKLGGPVWVVKAQIHAGGRGKGGGVKLARSLDEVRQLASQILGMQLVTHQTGAQGQKVNRLYIEDGADIQKEYYVSLVTDRGTQKVALIASSEGGMDIEEVAHSTPEKIITEYIDPIVGLTDAQAKKVADAIGMPADSTAQAVDVFKKLYQCYMDTDASLVEINPLNRDSKGNIIALDAKFNFDSNALFRHPEIVAYRDLDEEDPAEIEASKFDLAYIQLDGNIGCLVNGAGLAMATMDTIKLFGGEPANFLDVGGGATAEKVTEAFKIMLKNKGVKAILVNIFGGIMRCDVIAEGVISACKAVNLSVPLVVRMKGTNEELGKKMLAESGLPIISADTMAEAATKVVAAAK</sequence>
<keyword id="KW-0067">ATP-binding</keyword>
<keyword id="KW-0436">Ligase</keyword>
<keyword id="KW-0460">Magnesium</keyword>
<keyword id="KW-0479">Metal-binding</keyword>
<keyword id="KW-0547">Nucleotide-binding</keyword>
<keyword id="KW-1185">Reference proteome</keyword>
<keyword id="KW-0816">Tricarboxylic acid cycle</keyword>
<feature type="chain" id="PRO_1000082024" description="Succinate--CoA ligase [ADP-forming] subunit beta">
    <location>
        <begin position="1"/>
        <end position="386"/>
    </location>
</feature>
<feature type="domain" description="ATP-grasp" evidence="1">
    <location>
        <begin position="9"/>
        <end position="244"/>
    </location>
</feature>
<feature type="binding site" evidence="1">
    <location>
        <position position="46"/>
    </location>
    <ligand>
        <name>ATP</name>
        <dbReference type="ChEBI" id="CHEBI:30616"/>
    </ligand>
</feature>
<feature type="binding site" evidence="1">
    <location>
        <begin position="53"/>
        <end position="55"/>
    </location>
    <ligand>
        <name>ATP</name>
        <dbReference type="ChEBI" id="CHEBI:30616"/>
    </ligand>
</feature>
<feature type="binding site" evidence="1">
    <location>
        <position position="99"/>
    </location>
    <ligand>
        <name>ATP</name>
        <dbReference type="ChEBI" id="CHEBI:30616"/>
    </ligand>
</feature>
<feature type="binding site" evidence="1">
    <location>
        <position position="102"/>
    </location>
    <ligand>
        <name>ATP</name>
        <dbReference type="ChEBI" id="CHEBI:30616"/>
    </ligand>
</feature>
<feature type="binding site" evidence="1">
    <location>
        <position position="107"/>
    </location>
    <ligand>
        <name>ATP</name>
        <dbReference type="ChEBI" id="CHEBI:30616"/>
    </ligand>
</feature>
<feature type="binding site" evidence="1">
    <location>
        <position position="199"/>
    </location>
    <ligand>
        <name>Mg(2+)</name>
        <dbReference type="ChEBI" id="CHEBI:18420"/>
    </ligand>
</feature>
<feature type="binding site" evidence="1">
    <location>
        <position position="213"/>
    </location>
    <ligand>
        <name>Mg(2+)</name>
        <dbReference type="ChEBI" id="CHEBI:18420"/>
    </ligand>
</feature>
<feature type="binding site" evidence="1">
    <location>
        <position position="264"/>
    </location>
    <ligand>
        <name>substrate</name>
        <note>ligand shared with subunit alpha</note>
    </ligand>
</feature>
<feature type="binding site" evidence="1">
    <location>
        <begin position="321"/>
        <end position="323"/>
    </location>
    <ligand>
        <name>substrate</name>
        <note>ligand shared with subunit alpha</note>
    </ligand>
</feature>
<proteinExistence type="inferred from homology"/>
<protein>
    <recommendedName>
        <fullName evidence="1">Succinate--CoA ligase [ADP-forming] subunit beta</fullName>
        <ecNumber evidence="1">6.2.1.5</ecNumber>
    </recommendedName>
    <alternativeName>
        <fullName evidence="1">Succinyl-CoA synthetase subunit beta</fullName>
        <shortName evidence="1">SCS-beta</shortName>
    </alternativeName>
</protein>
<comment type="function">
    <text evidence="1">Succinyl-CoA synthetase functions in the citric acid cycle (TCA), coupling the hydrolysis of succinyl-CoA to the synthesis of either ATP or GTP and thus represents the only step of substrate-level phosphorylation in the TCA. The beta subunit provides nucleotide specificity of the enzyme and binds the substrate succinate, while the binding sites for coenzyme A and phosphate are found in the alpha subunit.</text>
</comment>
<comment type="catalytic activity">
    <reaction evidence="1">
        <text>succinate + ATP + CoA = succinyl-CoA + ADP + phosphate</text>
        <dbReference type="Rhea" id="RHEA:17661"/>
        <dbReference type="ChEBI" id="CHEBI:30031"/>
        <dbReference type="ChEBI" id="CHEBI:30616"/>
        <dbReference type="ChEBI" id="CHEBI:43474"/>
        <dbReference type="ChEBI" id="CHEBI:57287"/>
        <dbReference type="ChEBI" id="CHEBI:57292"/>
        <dbReference type="ChEBI" id="CHEBI:456216"/>
        <dbReference type="EC" id="6.2.1.5"/>
    </reaction>
    <physiologicalReaction direction="right-to-left" evidence="1">
        <dbReference type="Rhea" id="RHEA:17663"/>
    </physiologicalReaction>
</comment>
<comment type="catalytic activity">
    <reaction evidence="1">
        <text>GTP + succinate + CoA = succinyl-CoA + GDP + phosphate</text>
        <dbReference type="Rhea" id="RHEA:22120"/>
        <dbReference type="ChEBI" id="CHEBI:30031"/>
        <dbReference type="ChEBI" id="CHEBI:37565"/>
        <dbReference type="ChEBI" id="CHEBI:43474"/>
        <dbReference type="ChEBI" id="CHEBI:57287"/>
        <dbReference type="ChEBI" id="CHEBI:57292"/>
        <dbReference type="ChEBI" id="CHEBI:58189"/>
    </reaction>
    <physiologicalReaction direction="right-to-left" evidence="1">
        <dbReference type="Rhea" id="RHEA:22122"/>
    </physiologicalReaction>
</comment>
<comment type="cofactor">
    <cofactor evidence="1">
        <name>Mg(2+)</name>
        <dbReference type="ChEBI" id="CHEBI:18420"/>
    </cofactor>
    <text evidence="1">Binds 1 Mg(2+) ion per subunit.</text>
</comment>
<comment type="pathway">
    <text evidence="1">Carbohydrate metabolism; tricarboxylic acid cycle; succinate from succinyl-CoA (ligase route): step 1/1.</text>
</comment>
<comment type="subunit">
    <text evidence="1">Heterotetramer of two alpha and two beta subunits.</text>
</comment>
<comment type="similarity">
    <text evidence="1">Belongs to the succinate/malate CoA ligase beta subunit family.</text>
</comment>
<name>SUCC_BORA1</name>
<accession>Q2KYF7</accession>
<reference key="1">
    <citation type="journal article" date="2006" name="J. Bacteriol.">
        <title>Comparison of the genome sequence of the poultry pathogen Bordetella avium with those of B. bronchiseptica, B. pertussis, and B. parapertussis reveals extensive diversity in surface structures associated with host interaction.</title>
        <authorList>
            <person name="Sebaihia M."/>
            <person name="Preston A."/>
            <person name="Maskell D.J."/>
            <person name="Kuzmiak H."/>
            <person name="Connell T.D."/>
            <person name="King N.D."/>
            <person name="Orndorff P.E."/>
            <person name="Miyamoto D.M."/>
            <person name="Thomson N.R."/>
            <person name="Harris D."/>
            <person name="Goble A."/>
            <person name="Lord A."/>
            <person name="Murphy L."/>
            <person name="Quail M.A."/>
            <person name="Rutter S."/>
            <person name="Squares R."/>
            <person name="Squares S."/>
            <person name="Woodward J."/>
            <person name="Parkhill J."/>
            <person name="Temple L.M."/>
        </authorList>
    </citation>
    <scope>NUCLEOTIDE SEQUENCE [LARGE SCALE GENOMIC DNA]</scope>
    <source>
        <strain>197N</strain>
    </source>
</reference>
<gene>
    <name evidence="1" type="primary">sucC</name>
    <name type="ordered locus">BAV2304</name>
</gene>
<organism>
    <name type="scientific">Bordetella avium (strain 197N)</name>
    <dbReference type="NCBI Taxonomy" id="360910"/>
    <lineage>
        <taxon>Bacteria</taxon>
        <taxon>Pseudomonadati</taxon>
        <taxon>Pseudomonadota</taxon>
        <taxon>Betaproteobacteria</taxon>
        <taxon>Burkholderiales</taxon>
        <taxon>Alcaligenaceae</taxon>
        <taxon>Bordetella</taxon>
    </lineage>
</organism>
<evidence type="ECO:0000255" key="1">
    <source>
        <dbReference type="HAMAP-Rule" id="MF_00558"/>
    </source>
</evidence>